<evidence type="ECO:0000255" key="1">
    <source>
        <dbReference type="HAMAP-Rule" id="MF_00277"/>
    </source>
</evidence>
<evidence type="ECO:0000255" key="2">
    <source>
        <dbReference type="PROSITE-ProRule" id="PRU01175"/>
    </source>
</evidence>
<proteinExistence type="inferred from homology"/>
<protein>
    <recommendedName>
        <fullName evidence="1">Bifunctional uridylyltransferase/uridylyl-removing enzyme</fullName>
        <shortName evidence="1">UTase/UR</shortName>
    </recommendedName>
    <alternativeName>
        <fullName evidence="1">Bifunctional [protein-PII] modification enzyme</fullName>
    </alternativeName>
    <alternativeName>
        <fullName evidence="1">Bifunctional nitrogen sensor protein</fullName>
    </alternativeName>
    <domain>
        <recommendedName>
            <fullName evidence="1">[Protein-PII] uridylyltransferase</fullName>
            <shortName evidence="1">PII uridylyltransferase</shortName>
            <shortName evidence="1">UTase</shortName>
            <ecNumber evidence="1">2.7.7.59</ecNumber>
        </recommendedName>
    </domain>
    <domain>
        <recommendedName>
            <fullName evidence="1">[Protein-PII]-UMP uridylyl-removing enzyme</fullName>
            <shortName evidence="1">UR</shortName>
            <ecNumber evidence="1">3.1.4.-</ecNumber>
        </recommendedName>
    </domain>
</protein>
<feature type="chain" id="PRO_1000114753" description="Bifunctional uridylyltransferase/uridylyl-removing enzyme">
    <location>
        <begin position="1"/>
        <end position="890"/>
    </location>
</feature>
<feature type="domain" description="HD" evidence="2">
    <location>
        <begin position="468"/>
        <end position="590"/>
    </location>
</feature>
<feature type="domain" description="ACT 1" evidence="1">
    <location>
        <begin position="709"/>
        <end position="789"/>
    </location>
</feature>
<feature type="domain" description="ACT 2" evidence="1">
    <location>
        <begin position="816"/>
        <end position="890"/>
    </location>
</feature>
<feature type="region of interest" description="Uridylyltransferase">
    <location>
        <begin position="1"/>
        <end position="349"/>
    </location>
</feature>
<feature type="region of interest" description="Uridylyl-removing">
    <location>
        <begin position="350"/>
        <end position="708"/>
    </location>
</feature>
<dbReference type="EC" id="2.7.7.59" evidence="1"/>
<dbReference type="EC" id="3.1.4.-" evidence="1"/>
<dbReference type="EMBL" id="CP001164">
    <property type="protein sequence ID" value="ACI38384.1"/>
    <property type="molecule type" value="Genomic_DNA"/>
</dbReference>
<dbReference type="RefSeq" id="WP_001094581.1">
    <property type="nucleotide sequence ID" value="NC_011353.1"/>
</dbReference>
<dbReference type="SMR" id="B5Z0E5"/>
<dbReference type="KEGG" id="ecf:ECH74115_0175"/>
<dbReference type="HOGENOM" id="CLU_012833_0_0_6"/>
<dbReference type="GO" id="GO:0008773">
    <property type="term" value="F:[protein-PII] uridylyltransferase activity"/>
    <property type="evidence" value="ECO:0007669"/>
    <property type="project" value="UniProtKB-UniRule"/>
</dbReference>
<dbReference type="GO" id="GO:0008081">
    <property type="term" value="F:phosphoric diester hydrolase activity"/>
    <property type="evidence" value="ECO:0007669"/>
    <property type="project" value="UniProtKB-UniRule"/>
</dbReference>
<dbReference type="GO" id="GO:0006808">
    <property type="term" value="P:regulation of nitrogen utilization"/>
    <property type="evidence" value="ECO:0007669"/>
    <property type="project" value="UniProtKB-UniRule"/>
</dbReference>
<dbReference type="CDD" id="cd04899">
    <property type="entry name" value="ACT_ACR-UUR-like_2"/>
    <property type="match status" value="1"/>
</dbReference>
<dbReference type="CDD" id="cd04900">
    <property type="entry name" value="ACT_UUR-like_1"/>
    <property type="match status" value="1"/>
</dbReference>
<dbReference type="CDD" id="cd00077">
    <property type="entry name" value="HDc"/>
    <property type="match status" value="1"/>
</dbReference>
<dbReference type="CDD" id="cd05401">
    <property type="entry name" value="NT_GlnE_GlnD_like"/>
    <property type="match status" value="1"/>
</dbReference>
<dbReference type="FunFam" id="1.10.3210.10:FF:000005">
    <property type="entry name" value="Bifunctional uridylyltransferase/uridylyl-removing enzyme"/>
    <property type="match status" value="1"/>
</dbReference>
<dbReference type="Gene3D" id="1.10.3210.10">
    <property type="entry name" value="Hypothetical protein af1432"/>
    <property type="match status" value="1"/>
</dbReference>
<dbReference type="HAMAP" id="MF_00277">
    <property type="entry name" value="PII_uridylyl_transf"/>
    <property type="match status" value="1"/>
</dbReference>
<dbReference type="InterPro" id="IPR045865">
    <property type="entry name" value="ACT-like_dom_sf"/>
</dbReference>
<dbReference type="InterPro" id="IPR002912">
    <property type="entry name" value="ACT_dom"/>
</dbReference>
<dbReference type="InterPro" id="IPR003607">
    <property type="entry name" value="HD/PDEase_dom"/>
</dbReference>
<dbReference type="InterPro" id="IPR006674">
    <property type="entry name" value="HD_domain"/>
</dbReference>
<dbReference type="InterPro" id="IPR043519">
    <property type="entry name" value="NT_sf"/>
</dbReference>
<dbReference type="InterPro" id="IPR013546">
    <property type="entry name" value="PII_UdlTrfase/GS_AdlTrfase"/>
</dbReference>
<dbReference type="InterPro" id="IPR002934">
    <property type="entry name" value="Polymerase_NTP_transf_dom"/>
</dbReference>
<dbReference type="InterPro" id="IPR010043">
    <property type="entry name" value="UTase/UR"/>
</dbReference>
<dbReference type="NCBIfam" id="NF002487">
    <property type="entry name" value="PRK01759.1"/>
    <property type="match status" value="1"/>
</dbReference>
<dbReference type="NCBIfam" id="NF003448">
    <property type="entry name" value="PRK05007.1"/>
    <property type="match status" value="1"/>
</dbReference>
<dbReference type="NCBIfam" id="TIGR01693">
    <property type="entry name" value="UTase_glnD"/>
    <property type="match status" value="1"/>
</dbReference>
<dbReference type="PANTHER" id="PTHR47320">
    <property type="entry name" value="BIFUNCTIONAL URIDYLYLTRANSFERASE/URIDYLYL-REMOVING ENZYME"/>
    <property type="match status" value="1"/>
</dbReference>
<dbReference type="PANTHER" id="PTHR47320:SF1">
    <property type="entry name" value="BIFUNCTIONAL URIDYLYLTRANSFERASE_URIDYLYL-REMOVING ENZYME"/>
    <property type="match status" value="1"/>
</dbReference>
<dbReference type="Pfam" id="PF01842">
    <property type="entry name" value="ACT"/>
    <property type="match status" value="2"/>
</dbReference>
<dbReference type="Pfam" id="PF08335">
    <property type="entry name" value="GlnD_UR_UTase"/>
    <property type="match status" value="1"/>
</dbReference>
<dbReference type="Pfam" id="PF01966">
    <property type="entry name" value="HD"/>
    <property type="match status" value="1"/>
</dbReference>
<dbReference type="Pfam" id="PF01909">
    <property type="entry name" value="NTP_transf_2"/>
    <property type="match status" value="1"/>
</dbReference>
<dbReference type="PIRSF" id="PIRSF006288">
    <property type="entry name" value="PII_uridyltransf"/>
    <property type="match status" value="1"/>
</dbReference>
<dbReference type="SMART" id="SM00471">
    <property type="entry name" value="HDc"/>
    <property type="match status" value="1"/>
</dbReference>
<dbReference type="SUPFAM" id="SSF55021">
    <property type="entry name" value="ACT-like"/>
    <property type="match status" value="2"/>
</dbReference>
<dbReference type="SUPFAM" id="SSF109604">
    <property type="entry name" value="HD-domain/PDEase-like"/>
    <property type="match status" value="1"/>
</dbReference>
<dbReference type="SUPFAM" id="SSF81301">
    <property type="entry name" value="Nucleotidyltransferase"/>
    <property type="match status" value="1"/>
</dbReference>
<dbReference type="SUPFAM" id="SSF81593">
    <property type="entry name" value="Nucleotidyltransferase substrate binding subunit/domain"/>
    <property type="match status" value="1"/>
</dbReference>
<dbReference type="PROSITE" id="PS51671">
    <property type="entry name" value="ACT"/>
    <property type="match status" value="2"/>
</dbReference>
<dbReference type="PROSITE" id="PS51831">
    <property type="entry name" value="HD"/>
    <property type="match status" value="1"/>
</dbReference>
<reference key="1">
    <citation type="journal article" date="2011" name="Proc. Natl. Acad. Sci. U.S.A.">
        <title>Genomic anatomy of Escherichia coli O157:H7 outbreaks.</title>
        <authorList>
            <person name="Eppinger M."/>
            <person name="Mammel M.K."/>
            <person name="Leclerc J.E."/>
            <person name="Ravel J."/>
            <person name="Cebula T.A."/>
        </authorList>
    </citation>
    <scope>NUCLEOTIDE SEQUENCE [LARGE SCALE GENOMIC DNA]</scope>
    <source>
        <strain>EC4115 / EHEC</strain>
    </source>
</reference>
<keyword id="KW-0378">Hydrolase</keyword>
<keyword id="KW-0460">Magnesium</keyword>
<keyword id="KW-0511">Multifunctional enzyme</keyword>
<keyword id="KW-0548">Nucleotidyltransferase</keyword>
<keyword id="KW-0677">Repeat</keyword>
<keyword id="KW-0808">Transferase</keyword>
<sequence length="890" mass="102422">MNTLPEQYANTALPTLPGQPQNPCVWPRDELTVGGIKAHIDTFQRWLGDAFDNGISAEQLIEARTEFIDQLLQRLWIEAGFSQIADLALVAVGGYGRGELHPLSDIDLLILSRKKLPDDQAQKVGELLTLLWDVKLEVGHSVRTLEECMLEGLSDLTVATNLIESRLLIGDVALFLELQKHIFSEGFWPSDKFYAAKVEEQNQRHQRYHGTSYNLEPDIKSSPGGLRDIHTLQWVARRHFGATSLDEMVGFGFLTSAERAELNECLHILWRIRFALHLVVSRYDNRLLFDRQLSVAQRLNYSGEGNEPVERMMKDYFRVTRRVSELNQMLLQLFDEAILALPADEKPRPIDDEFQLRGTLIDLRDETLFMRQPEAILRMFYTMVRNSAITGIYSTTLRQLRHARRHLQQPLCNIPQARKLFLSILRHPGAVRRGLLPMHRHSVLGAYMPQWSHIVGQMQFDLFHAYTVDEHTIRVMLKLESFASEETRQRHPLCVNVWPRLPSTELIFIAALFHDIAKGRGGDHSILGAQDVVHFAELHGLNSRETQLVAWLVRQHLLMSVTAQRRDIQDPEVIKQFAEEVQTENRLRYLVCLTVADICATNETLWNSWKQSLLRELYFATEKQLRRGMQNTPDMRERVRHHQLQALALLRMDNIDEEVLHQIWSRCRANYFVRHSPNQLAWHARHLLQHDLSKPLVLLSPQATRGGTEIFIWSPDRPYLFAAVCAELDRRNLSVHDAQIFTTRDGMAMDTFIVLEPDGSPLSADRHEVIRFGLEQVLTQSSWQPPQPRRQPAKLRHFTVETEVTFLPTHTDRKSFLELIALDQPGLLARVGKIFADLGISLHGARITTIGERVEDLFIIATADRRALNNELQQEVHQRLTEALNPNDKG</sequence>
<name>GLND_ECO5E</name>
<comment type="function">
    <text evidence="1">Modifies, by uridylylation and deuridylylation, the PII regulatory proteins (GlnB and homologs), in response to the nitrogen status of the cell that GlnD senses through the glutamine level. Under low glutamine levels, catalyzes the conversion of the PII proteins and UTP to PII-UMP and PPi, while under higher glutamine levels, GlnD hydrolyzes PII-UMP to PII and UMP (deuridylylation). Thus, controls uridylylation state and activity of the PII proteins, and plays an important role in the regulation of nitrogen assimilation and metabolism.</text>
</comment>
<comment type="catalytic activity">
    <reaction evidence="1">
        <text>[protein-PII]-L-tyrosine + UTP = [protein-PII]-uridylyl-L-tyrosine + diphosphate</text>
        <dbReference type="Rhea" id="RHEA:13673"/>
        <dbReference type="Rhea" id="RHEA-COMP:12147"/>
        <dbReference type="Rhea" id="RHEA-COMP:12148"/>
        <dbReference type="ChEBI" id="CHEBI:33019"/>
        <dbReference type="ChEBI" id="CHEBI:46398"/>
        <dbReference type="ChEBI" id="CHEBI:46858"/>
        <dbReference type="ChEBI" id="CHEBI:90602"/>
        <dbReference type="EC" id="2.7.7.59"/>
    </reaction>
</comment>
<comment type="catalytic activity">
    <reaction evidence="1">
        <text>[protein-PII]-uridylyl-L-tyrosine + H2O = [protein-PII]-L-tyrosine + UMP + H(+)</text>
        <dbReference type="Rhea" id="RHEA:48600"/>
        <dbReference type="Rhea" id="RHEA-COMP:12147"/>
        <dbReference type="Rhea" id="RHEA-COMP:12148"/>
        <dbReference type="ChEBI" id="CHEBI:15377"/>
        <dbReference type="ChEBI" id="CHEBI:15378"/>
        <dbReference type="ChEBI" id="CHEBI:46858"/>
        <dbReference type="ChEBI" id="CHEBI:57865"/>
        <dbReference type="ChEBI" id="CHEBI:90602"/>
    </reaction>
</comment>
<comment type="cofactor">
    <cofactor evidence="1">
        <name>Mg(2+)</name>
        <dbReference type="ChEBI" id="CHEBI:18420"/>
    </cofactor>
</comment>
<comment type="activity regulation">
    <text evidence="1">Uridylyltransferase (UTase) activity is inhibited by glutamine, while glutamine activates uridylyl-removing (UR) activity.</text>
</comment>
<comment type="domain">
    <text evidence="1">Has four distinct domains: an N-terminal nucleotidyltransferase (NT) domain responsible for UTase activity, a central HD domain that encodes UR activity, and two C-terminal ACT domains that seem to have a role in glutamine sensing.</text>
</comment>
<comment type="similarity">
    <text evidence="1">Belongs to the GlnD family.</text>
</comment>
<accession>B5Z0E5</accession>
<gene>
    <name evidence="1" type="primary">glnD</name>
    <name type="ordered locus">ECH74115_0175</name>
</gene>
<organism>
    <name type="scientific">Escherichia coli O157:H7 (strain EC4115 / EHEC)</name>
    <dbReference type="NCBI Taxonomy" id="444450"/>
    <lineage>
        <taxon>Bacteria</taxon>
        <taxon>Pseudomonadati</taxon>
        <taxon>Pseudomonadota</taxon>
        <taxon>Gammaproteobacteria</taxon>
        <taxon>Enterobacterales</taxon>
        <taxon>Enterobacteriaceae</taxon>
        <taxon>Escherichia</taxon>
    </lineage>
</organism>